<protein>
    <recommendedName>
        <fullName evidence="1">Alginate lyase</fullName>
        <ecNumber evidence="1">4.2.2.3</ecNumber>
    </recommendedName>
    <alternativeName>
        <fullName evidence="1">Poly(beta-D-mannuronate) lyase</fullName>
    </alternativeName>
</protein>
<proteinExistence type="inferred from homology"/>
<sequence length="373" mass="42323">MRLPMQKLLIPTLLGLAMFAGSVNAAAPLRPPQGYFAPVEAFKTGDFKNDCDAMPPPYTGSLQFRSKYEGSDKARSTLNVQSEKAFRDSTADITKLEKDTSKRVMQFMRDGRPEQLECTLNWLTSWAKADALMSKDFNHTGKSMRKWALGSMASAYVRLKFSDSHPLANHQQESQLIEAWFNKLADQVVSDWDNLPLEKTNNHSYWAAWSVMATSVATNRRDLFDWAVKEYKVGVNQVDDQGFLPNELKRQQRALSYHNYALPPLSMIASFALVNGVDLRQENNSALKRLGDKVLAGVKDPEIFEKKNGKEQDMKDLKEDMKYAWLEPFCTLYTCAPDVIERKHGMQPFKTFRLGGDLTKVYDPTHEKGNKGS</sequence>
<accession>C3KDZ3</accession>
<reference key="1">
    <citation type="journal article" date="2009" name="Genome Biol.">
        <title>Genomic and genetic analyses of diversity and plant interactions of Pseudomonas fluorescens.</title>
        <authorList>
            <person name="Silby M.W."/>
            <person name="Cerdeno-Tarraga A.M."/>
            <person name="Vernikos G.S."/>
            <person name="Giddens S.R."/>
            <person name="Jackson R.W."/>
            <person name="Preston G.M."/>
            <person name="Zhang X.-X."/>
            <person name="Moon C.D."/>
            <person name="Gehrig S.M."/>
            <person name="Godfrey S.A.C."/>
            <person name="Knight C.G."/>
            <person name="Malone J.G."/>
            <person name="Robinson Z."/>
            <person name="Spiers A.J."/>
            <person name="Harris S."/>
            <person name="Challis G.L."/>
            <person name="Yaxley A.M."/>
            <person name="Harris D."/>
            <person name="Seeger K."/>
            <person name="Murphy L."/>
            <person name="Rutter S."/>
            <person name="Squares R."/>
            <person name="Quail M.A."/>
            <person name="Saunders E."/>
            <person name="Mavromatis K."/>
            <person name="Brettin T.S."/>
            <person name="Bentley S.D."/>
            <person name="Hothersall J."/>
            <person name="Stephens E."/>
            <person name="Thomas C.M."/>
            <person name="Parkhill J."/>
            <person name="Levy S.B."/>
            <person name="Rainey P.B."/>
            <person name="Thomson N.R."/>
        </authorList>
    </citation>
    <scope>NUCLEOTIDE SEQUENCE [LARGE SCALE GENOMIC DNA]</scope>
    <source>
        <strain>SBW25</strain>
    </source>
</reference>
<organism>
    <name type="scientific">Pseudomonas fluorescens (strain SBW25)</name>
    <dbReference type="NCBI Taxonomy" id="216595"/>
    <lineage>
        <taxon>Bacteria</taxon>
        <taxon>Pseudomonadati</taxon>
        <taxon>Pseudomonadota</taxon>
        <taxon>Gammaproteobacteria</taxon>
        <taxon>Pseudomonadales</taxon>
        <taxon>Pseudomonadaceae</taxon>
        <taxon>Pseudomonas</taxon>
    </lineage>
</organism>
<comment type="function">
    <text evidence="1">Catalyzes the depolymerization of alginate by cleaving the beta-1,4 glycosidic bond between two adjacent sugar residues via a beta-elimination mechanism. May serve to degrade mislocalized alginate that is trapped in the periplasmic space.</text>
</comment>
<comment type="catalytic activity">
    <reaction evidence="1">
        <text>Eliminative cleavage of alginate to give oligosaccharides with 4-deoxy-alpha-L-erythro-hex-4-enuronosyl groups at their non-reducing ends and beta-D-mannuronate at their reducing end.</text>
        <dbReference type="EC" id="4.2.2.3"/>
    </reaction>
</comment>
<comment type="subcellular location">
    <subcellularLocation>
        <location evidence="1">Periplasm</location>
    </subcellularLocation>
</comment>
<comment type="similarity">
    <text evidence="1">Belongs to the polysaccharide lyase 5 family.</text>
</comment>
<evidence type="ECO:0000255" key="1">
    <source>
        <dbReference type="HAMAP-Rule" id="MF_00557"/>
    </source>
</evidence>
<name>ALGL_PSEFS</name>
<dbReference type="EC" id="4.2.2.3" evidence="1"/>
<dbReference type="EMBL" id="AM181176">
    <property type="protein sequence ID" value="CAY47248.1"/>
    <property type="molecule type" value="Genomic_DNA"/>
</dbReference>
<dbReference type="SMR" id="C3KDZ3"/>
<dbReference type="STRING" id="294.SRM1_00995"/>
<dbReference type="CAZy" id="PL5">
    <property type="family name" value="Polysaccharide Lyase Family 5"/>
</dbReference>
<dbReference type="eggNOG" id="ENOG502ZAMJ">
    <property type="taxonomic scope" value="Bacteria"/>
</dbReference>
<dbReference type="HOGENOM" id="CLU_064286_0_0_6"/>
<dbReference type="GO" id="GO:0042597">
    <property type="term" value="C:periplasmic space"/>
    <property type="evidence" value="ECO:0007669"/>
    <property type="project" value="UniProtKB-SubCell"/>
</dbReference>
<dbReference type="GO" id="GO:0045135">
    <property type="term" value="F:poly(beta-D-mannuronate) lyase activity"/>
    <property type="evidence" value="ECO:0007669"/>
    <property type="project" value="UniProtKB-UniRule"/>
</dbReference>
<dbReference type="GO" id="GO:0042122">
    <property type="term" value="P:alginic acid catabolic process"/>
    <property type="evidence" value="ECO:0007669"/>
    <property type="project" value="UniProtKB-UniRule"/>
</dbReference>
<dbReference type="CDD" id="cd00244">
    <property type="entry name" value="AlgLyase"/>
    <property type="match status" value="1"/>
</dbReference>
<dbReference type="Gene3D" id="1.50.10.100">
    <property type="entry name" value="Chondroitin AC/alginate lyase"/>
    <property type="match status" value="1"/>
</dbReference>
<dbReference type="HAMAP" id="MF_00557">
    <property type="entry name" value="Alginate_lyase"/>
    <property type="match status" value="1"/>
</dbReference>
<dbReference type="InterPro" id="IPR022859">
    <property type="entry name" value="Alginate_lyase"/>
</dbReference>
<dbReference type="InterPro" id="IPR008397">
    <property type="entry name" value="Alginate_lyase_dom"/>
</dbReference>
<dbReference type="InterPro" id="IPR008929">
    <property type="entry name" value="Chondroitin_lyas"/>
</dbReference>
<dbReference type="NCBIfam" id="NF001467">
    <property type="entry name" value="PRK00325.1-2"/>
    <property type="match status" value="1"/>
</dbReference>
<dbReference type="NCBIfam" id="NF001468">
    <property type="entry name" value="PRK00325.1-3"/>
    <property type="match status" value="1"/>
</dbReference>
<dbReference type="Pfam" id="PF05426">
    <property type="entry name" value="Alginate_lyase"/>
    <property type="match status" value="1"/>
</dbReference>
<dbReference type="SUPFAM" id="SSF48230">
    <property type="entry name" value="Chondroitin AC/alginate lyase"/>
    <property type="match status" value="1"/>
</dbReference>
<gene>
    <name evidence="1" type="primary">algL</name>
    <name type="ordered locus">PFLU_0983</name>
</gene>
<keyword id="KW-0456">Lyase</keyword>
<keyword id="KW-0574">Periplasm</keyword>
<keyword id="KW-0732">Signal</keyword>
<feature type="signal peptide" evidence="1">
    <location>
        <begin position="1"/>
        <end position="25"/>
    </location>
</feature>
<feature type="chain" id="PRO_5000460114" description="Alginate lyase">
    <location>
        <begin position="26"/>
        <end position="373"/>
    </location>
</feature>
<feature type="binding site" evidence="1">
    <location>
        <begin position="66"/>
        <end position="67"/>
    </location>
    <ligand>
        <name>substrate</name>
    </ligand>
</feature>
<feature type="binding site" evidence="1">
    <location>
        <begin position="139"/>
        <end position="140"/>
    </location>
    <ligand>
        <name>substrate</name>
    </ligand>
</feature>
<feature type="binding site" evidence="1">
    <location>
        <position position="257"/>
    </location>
    <ligand>
        <name>substrate</name>
    </ligand>
</feature>